<feature type="chain" id="PRO_0000406860" description="Uncharacterized protein UL3">
    <location>
        <begin position="1"/>
        <end position="200"/>
    </location>
</feature>
<dbReference type="EMBL" id="AY372243">
    <property type="protein sequence ID" value="AAQ73743.1"/>
    <property type="molecule type" value="Genomic_DNA"/>
</dbReference>
<dbReference type="Proteomes" id="UP000006840">
    <property type="component" value="Segment"/>
</dbReference>
<organismHost>
    <name type="scientific">Amazona oratrix</name>
    <name type="common">yellow-headed parrot</name>
    <dbReference type="NCBI Taxonomy" id="152276"/>
</organismHost>
<name>UL03_PSHV1</name>
<reference key="1">
    <citation type="journal article" date="2006" name="J. Virol.">
        <title>Psittacid herpesvirus 1 and infectious laryngotracheitis virus: Comparative genome sequence analysis of two avian alphaherpesviruses.</title>
        <authorList>
            <person name="Thureen D.R."/>
            <person name="Keeler C.L. Jr."/>
        </authorList>
    </citation>
    <scope>NUCLEOTIDE SEQUENCE [LARGE SCALE GENOMIC DNA]</scope>
</reference>
<protein>
    <recommendedName>
        <fullName>Uncharacterized protein UL3</fullName>
    </recommendedName>
</protein>
<gene>
    <name type="primary">UL3</name>
</gene>
<keyword id="KW-1185">Reference proteome</keyword>
<sequence>MPRQLLAHVCQVVPGNEHRAVRYEFVEKHGHAGPGLAVLRLRKVLPRFTRRDDIPQPSANLRRVPALAKQKHLQALLRLMRPGESRGLRAGHRHPIQRCVQVLAYVVRELAPAELAKRENHEHVIEPARVWRLVLLLPARTYVRAVRASLPQRVPASHIWHEAFVTEIYRGCLDTLRVGQTGEAQHIGDRWYFRIHKHSR</sequence>
<organism>
    <name type="scientific">Psittacid herpesvirus 1 (isolate Amazon parrot/-/97-0001/1997)</name>
    <name type="common">PsHV-1</name>
    <name type="synonym">Pacheco's disease virus</name>
    <dbReference type="NCBI Taxonomy" id="670426"/>
    <lineage>
        <taxon>Viruses</taxon>
        <taxon>Duplodnaviria</taxon>
        <taxon>Heunggongvirae</taxon>
        <taxon>Peploviricota</taxon>
        <taxon>Herviviricetes</taxon>
        <taxon>Herpesvirales</taxon>
        <taxon>Orthoherpesviridae</taxon>
        <taxon>Alphaherpesvirinae</taxon>
        <taxon>Iltovirus</taxon>
        <taxon>Iltovirus psittacidalpha1</taxon>
        <taxon>Psittacid alphaherpesvirus 1</taxon>
    </lineage>
</organism>
<proteinExistence type="predicted"/>
<accession>Q6UDG7</accession>